<accession>Q96S07</accession>
<sequence>MARTDQKPPCRGGCWGQPGHPNTGGAAAHPTYHPMGHRPRTCILLRGDQTTGGQAPSREISLGPWAAGTHFLAISTTPWGRKTPACISELPTSSGTAQPLANAVCEVQTVPGPGLRPQGTPAMRAPSHKGTPPTPNPWGPEQPQNRHKHPKKGVTGGPSPPPPAASRYGQTPGREPRVQAPGLGPCGRPASGRLLSLHLEKGDGKGTRQRIPLTDAAVGGDRTDIPSAIAAGPARTPDRHGLPIPGSTPTPMVGSGRLGAPVGRSGGGASARSSRPSCANVLLRADASLGTVLSVLWTGQLSRGWALLPPGDAGRHLETSVISAGVAAGIWLVEPGEAAQDPATRRTAPPRRTASPEPPAPGAPLPACPGRIPGAARFGPRSCPLGSPAVLAVTTGWSHRSV</sequence>
<reference key="1">
    <citation type="journal article" date="2001" name="Hum. Mol. Genet.">
        <title>Sequence, structure and pathology of the fully annotated terminal 2 Mb of the short arm of human chromosome 16.</title>
        <authorList>
            <person name="Daniels R.J."/>
            <person name="Peden J.F."/>
            <person name="Lloyd C."/>
            <person name="Horsley S.W."/>
            <person name="Clark K."/>
            <person name="Tufarelli C."/>
            <person name="Kearney L."/>
            <person name="Buckle V.J."/>
            <person name="Doggett N.A."/>
            <person name="Flint J."/>
            <person name="Higgs D.R."/>
        </authorList>
    </citation>
    <scope>NUCLEOTIDE SEQUENCE [LARGE SCALE GENOMIC DNA]</scope>
</reference>
<reference key="2">
    <citation type="journal article" date="2004" name="Nature">
        <title>The sequence and analysis of duplication-rich human chromosome 16.</title>
        <authorList>
            <person name="Martin J."/>
            <person name="Han C."/>
            <person name="Gordon L.A."/>
            <person name="Terry A."/>
            <person name="Prabhakar S."/>
            <person name="She X."/>
            <person name="Xie G."/>
            <person name="Hellsten U."/>
            <person name="Chan Y.M."/>
            <person name="Altherr M."/>
            <person name="Couronne O."/>
            <person name="Aerts A."/>
            <person name="Bajorek E."/>
            <person name="Black S."/>
            <person name="Blumer H."/>
            <person name="Branscomb E."/>
            <person name="Brown N.C."/>
            <person name="Bruno W.J."/>
            <person name="Buckingham J.M."/>
            <person name="Callen D.F."/>
            <person name="Campbell C.S."/>
            <person name="Campbell M.L."/>
            <person name="Campbell E.W."/>
            <person name="Caoile C."/>
            <person name="Challacombe J.F."/>
            <person name="Chasteen L.A."/>
            <person name="Chertkov O."/>
            <person name="Chi H.C."/>
            <person name="Christensen M."/>
            <person name="Clark L.M."/>
            <person name="Cohn J.D."/>
            <person name="Denys M."/>
            <person name="Detter J.C."/>
            <person name="Dickson M."/>
            <person name="Dimitrijevic-Bussod M."/>
            <person name="Escobar J."/>
            <person name="Fawcett J.J."/>
            <person name="Flowers D."/>
            <person name="Fotopulos D."/>
            <person name="Glavina T."/>
            <person name="Gomez M."/>
            <person name="Gonzales E."/>
            <person name="Goodstein D."/>
            <person name="Goodwin L.A."/>
            <person name="Grady D.L."/>
            <person name="Grigoriev I."/>
            <person name="Groza M."/>
            <person name="Hammon N."/>
            <person name="Hawkins T."/>
            <person name="Haydu L."/>
            <person name="Hildebrand C.E."/>
            <person name="Huang W."/>
            <person name="Israni S."/>
            <person name="Jett J."/>
            <person name="Jewett P.B."/>
            <person name="Kadner K."/>
            <person name="Kimball H."/>
            <person name="Kobayashi A."/>
            <person name="Krawczyk M.-C."/>
            <person name="Leyba T."/>
            <person name="Longmire J.L."/>
            <person name="Lopez F."/>
            <person name="Lou Y."/>
            <person name="Lowry S."/>
            <person name="Ludeman T."/>
            <person name="Manohar C.F."/>
            <person name="Mark G.A."/>
            <person name="McMurray K.L."/>
            <person name="Meincke L.J."/>
            <person name="Morgan J."/>
            <person name="Moyzis R.K."/>
            <person name="Mundt M.O."/>
            <person name="Munk A.C."/>
            <person name="Nandkeshwar R.D."/>
            <person name="Pitluck S."/>
            <person name="Pollard M."/>
            <person name="Predki P."/>
            <person name="Parson-Quintana B."/>
            <person name="Ramirez L."/>
            <person name="Rash S."/>
            <person name="Retterer J."/>
            <person name="Ricke D.O."/>
            <person name="Robinson D.L."/>
            <person name="Rodriguez A."/>
            <person name="Salamov A."/>
            <person name="Saunders E.H."/>
            <person name="Scott D."/>
            <person name="Shough T."/>
            <person name="Stallings R.L."/>
            <person name="Stalvey M."/>
            <person name="Sutherland R.D."/>
            <person name="Tapia R."/>
            <person name="Tesmer J.G."/>
            <person name="Thayer N."/>
            <person name="Thompson L.S."/>
            <person name="Tice H."/>
            <person name="Torney D.C."/>
            <person name="Tran-Gyamfi M."/>
            <person name="Tsai M."/>
            <person name="Ulanovsky L.E."/>
            <person name="Ustaszewska A."/>
            <person name="Vo N."/>
            <person name="White P.S."/>
            <person name="Williams A.L."/>
            <person name="Wills P.L."/>
            <person name="Wu J.-R."/>
            <person name="Wu K."/>
            <person name="Yang J."/>
            <person name="DeJong P."/>
            <person name="Bruce D."/>
            <person name="Doggett N.A."/>
            <person name="Deaven L."/>
            <person name="Schmutz J."/>
            <person name="Grimwood J."/>
            <person name="Richardson P."/>
            <person name="Rokhsar D.S."/>
            <person name="Eichler E.E."/>
            <person name="Gilna P."/>
            <person name="Lucas S.M."/>
            <person name="Myers R.M."/>
            <person name="Rubin E.M."/>
            <person name="Pennacchio L.A."/>
        </authorList>
    </citation>
    <scope>NUCLEOTIDE SEQUENCE [LARGE SCALE GENOMIC DNA]</scope>
</reference>
<evidence type="ECO:0000256" key="1">
    <source>
        <dbReference type="SAM" id="MobiDB-lite"/>
    </source>
</evidence>
<organism>
    <name type="scientific">Homo sapiens</name>
    <name type="common">Human</name>
    <dbReference type="NCBI Taxonomy" id="9606"/>
    <lineage>
        <taxon>Eukaryota</taxon>
        <taxon>Metazoa</taxon>
        <taxon>Chordata</taxon>
        <taxon>Craniata</taxon>
        <taxon>Vertebrata</taxon>
        <taxon>Euteleostomi</taxon>
        <taxon>Mammalia</taxon>
        <taxon>Eutheria</taxon>
        <taxon>Euarchontoglires</taxon>
        <taxon>Primates</taxon>
        <taxon>Haplorrhini</taxon>
        <taxon>Catarrhini</taxon>
        <taxon>Hominidae</taxon>
        <taxon>Homo</taxon>
    </lineage>
</organism>
<keyword id="KW-1185">Reference proteome</keyword>
<name>PRR25_HUMAN</name>
<dbReference type="EMBL" id="AE006465">
    <property type="protein sequence ID" value="AAK61258.1"/>
    <property type="molecule type" value="Genomic_DNA"/>
</dbReference>
<dbReference type="EMBL" id="AL023882">
    <property type="status" value="NOT_ANNOTATED_CDS"/>
    <property type="molecule type" value="Genomic_DNA"/>
</dbReference>
<dbReference type="EMBL" id="AL031033">
    <property type="status" value="NOT_ANNOTATED_CDS"/>
    <property type="molecule type" value="Genomic_DNA"/>
</dbReference>
<dbReference type="RefSeq" id="NP_001013660.1">
    <property type="nucleotide sequence ID" value="NM_001013638.1"/>
</dbReference>
<dbReference type="BioGRID" id="132599">
    <property type="interactions" value="16"/>
</dbReference>
<dbReference type="IntAct" id="Q96S07">
    <property type="interactions" value="1"/>
</dbReference>
<dbReference type="GlyGen" id="Q96S07">
    <property type="glycosylation" value="2 sites, 1 O-linked glycan (1 site)"/>
</dbReference>
<dbReference type="iPTMnet" id="Q96S07"/>
<dbReference type="PhosphoSitePlus" id="Q96S07"/>
<dbReference type="BioMuta" id="PRR25"/>
<dbReference type="DMDM" id="74717263"/>
<dbReference type="PaxDb" id="9606-ENSP00000301698"/>
<dbReference type="ProteomicsDB" id="78051"/>
<dbReference type="DNASU" id="388199"/>
<dbReference type="UCSC" id="uc010uut.2">
    <property type="organism name" value="human"/>
</dbReference>
<dbReference type="AGR" id="HGNC:37230"/>
<dbReference type="GeneCards" id="PRR25"/>
<dbReference type="HGNC" id="HGNC:37230">
    <property type="gene designation" value="PRR25"/>
</dbReference>
<dbReference type="neXtProt" id="NX_Q96S07"/>
<dbReference type="PharmGKB" id="PA165450599"/>
<dbReference type="eggNOG" id="ENOG502TENU">
    <property type="taxonomic scope" value="Eukaryota"/>
</dbReference>
<dbReference type="HOGENOM" id="CLU_698216_0_0_1"/>
<dbReference type="InParanoid" id="Q96S07"/>
<dbReference type="PAN-GO" id="Q96S07">
    <property type="GO annotations" value="0 GO annotations based on evolutionary models"/>
</dbReference>
<dbReference type="PhylomeDB" id="Q96S07"/>
<dbReference type="TreeFam" id="TF341855"/>
<dbReference type="PathwayCommons" id="Q96S07"/>
<dbReference type="SignaLink" id="Q96S07"/>
<dbReference type="BioGRID-ORCS" id="388199">
    <property type="hits" value="21 hits in 1137 CRISPR screens"/>
</dbReference>
<dbReference type="GenomeRNAi" id="388199"/>
<dbReference type="Pharos" id="Q96S07">
    <property type="development level" value="Tdark"/>
</dbReference>
<dbReference type="PRO" id="PR:Q96S07"/>
<dbReference type="Proteomes" id="UP000005640">
    <property type="component" value="Unplaced"/>
</dbReference>
<dbReference type="RNAct" id="Q96S07">
    <property type="molecule type" value="protein"/>
</dbReference>
<proteinExistence type="predicted"/>
<feature type="chain" id="PRO_0000394497" description="Proline-rich protein 25">
    <location>
        <begin position="1"/>
        <end position="402"/>
    </location>
</feature>
<feature type="region of interest" description="Disordered" evidence="1">
    <location>
        <begin position="1"/>
        <end position="29"/>
    </location>
</feature>
<feature type="region of interest" description="Disordered" evidence="1">
    <location>
        <begin position="109"/>
        <end position="255"/>
    </location>
</feature>
<feature type="region of interest" description="Disordered" evidence="1">
    <location>
        <begin position="337"/>
        <end position="371"/>
    </location>
</feature>
<feature type="compositionally biased region" description="Low complexity" evidence="1">
    <location>
        <begin position="345"/>
        <end position="355"/>
    </location>
</feature>
<feature type="compositionally biased region" description="Pro residues" evidence="1">
    <location>
        <begin position="356"/>
        <end position="367"/>
    </location>
</feature>
<feature type="sequence variant" id="VAR_063210" description="In dbSNP:rs1005190.">
    <original>T</original>
    <variation>S</variation>
    <location>
        <position position="92"/>
    </location>
</feature>
<feature type="sequence variant" id="VAR_063211" description="In dbSNP:rs13337837.">
    <original>P</original>
    <variation>L</variation>
    <location>
        <position position="249"/>
    </location>
</feature>
<protein>
    <recommendedName>
        <fullName>Proline-rich protein 25</fullName>
    </recommendedName>
</protein>
<gene>
    <name type="primary">PRR25</name>
    <name type="ORF">gs64</name>
</gene>